<name>MSHA_XYLCX</name>
<reference key="1">
    <citation type="submission" date="2009-11" db="EMBL/GenBank/DDBJ databases">
        <title>The complete chromosome of Xylanimonas cellulosilytica DSM 15894.</title>
        <authorList>
            <consortium name="US DOE Joint Genome Institute (JGI-PGF)"/>
            <person name="Lucas S."/>
            <person name="Copeland A."/>
            <person name="Lapidus A."/>
            <person name="Glavina del Rio T."/>
            <person name="Dalin E."/>
            <person name="Tice H."/>
            <person name="Bruce D."/>
            <person name="Goodwin L."/>
            <person name="Pitluck S."/>
            <person name="Kyrpides N."/>
            <person name="Mavromatis K."/>
            <person name="Ivanova N."/>
            <person name="Mikhailova N."/>
            <person name="Foster B."/>
            <person name="Clum A."/>
            <person name="Brettin T."/>
            <person name="Detter J.C."/>
            <person name="Han C."/>
            <person name="Larimer F."/>
            <person name="Land M."/>
            <person name="Hauser L."/>
            <person name="Markowitz V."/>
            <person name="Cheng J.F."/>
            <person name="Hugenholtz P."/>
            <person name="Woyke T."/>
            <person name="Wu D."/>
            <person name="Gehrich-Schroeter G."/>
            <person name="Schneider S."/>
            <person name="Pukall S.R."/>
            <person name="Klenk H.P."/>
            <person name="Eisen J.A."/>
        </authorList>
    </citation>
    <scope>NUCLEOTIDE SEQUENCE [LARGE SCALE GENOMIC DNA]</scope>
    <source>
        <strain>DSM 15894 / JCM 12276 / CECT 5975 / KCTC 9989 / LMG 20990 / NBRC 107835 / XIL07</strain>
    </source>
</reference>
<gene>
    <name evidence="1" type="primary">mshA</name>
    <name type="ordered locus">Xcel_2973</name>
</gene>
<proteinExistence type="inferred from homology"/>
<comment type="function">
    <text evidence="1">Catalyzes the transfer of a N-acetyl-glucosamine moiety to 1D-myo-inositol 3-phosphate to produce 1D-myo-inositol 2-acetamido-2-deoxy-glucopyranoside 3-phosphate in the mycothiol biosynthesis pathway.</text>
</comment>
<comment type="catalytic activity">
    <reaction evidence="1">
        <text>1D-myo-inositol 3-phosphate + UDP-N-acetyl-alpha-D-glucosamine = 1D-myo-inositol 2-acetamido-2-deoxy-alpha-D-glucopyranoside 3-phosphate + UDP + H(+)</text>
        <dbReference type="Rhea" id="RHEA:26188"/>
        <dbReference type="ChEBI" id="CHEBI:15378"/>
        <dbReference type="ChEBI" id="CHEBI:57705"/>
        <dbReference type="ChEBI" id="CHEBI:58223"/>
        <dbReference type="ChEBI" id="CHEBI:58401"/>
        <dbReference type="ChEBI" id="CHEBI:58892"/>
        <dbReference type="EC" id="2.4.1.250"/>
    </reaction>
</comment>
<comment type="subunit">
    <text evidence="1">Homodimer.</text>
</comment>
<comment type="similarity">
    <text evidence="1">Belongs to the glycosyltransferase group 1 family. MshA subfamily.</text>
</comment>
<organism>
    <name type="scientific">Xylanimonas cellulosilytica (strain DSM 15894 / JCM 12276 / CECT 5975 / KCTC 9989 / LMG 20990 / NBRC 107835 / XIL07)</name>
    <dbReference type="NCBI Taxonomy" id="446471"/>
    <lineage>
        <taxon>Bacteria</taxon>
        <taxon>Bacillati</taxon>
        <taxon>Actinomycetota</taxon>
        <taxon>Actinomycetes</taxon>
        <taxon>Micrococcales</taxon>
        <taxon>Promicromonosporaceae</taxon>
        <taxon>Xylanimonas</taxon>
    </lineage>
</organism>
<sequence>MPGTRGPRVAMLSVHTSPLDQPGTGDAGGMNVYVLELSRALARRGAEVEIFTRATSSAQPPVVDVQPGIRVLHVPAGPFEGLDKNDLPGQLCAFTAGVLRAEAHRSEGWYDVVHTHYWLSGQAGWLAAERWDVPLVHTMHTMARVKNAALAPGDVPEPQGRVIGEEQVVAASDALVASTREEAEDLVRLYGADLDRIHVVPPGVDLDTFTPPVPSDATARTALRERLGLPVDSPLILFAGRVQLLKGPDVLVQALEHLPEEVRLVVLGGASGRPTAVRELEALAHQCGVRDRVLVHPPVERRRLADWYRAADVVAVPSHNESFGLVAAEAQACGTPVVAAAVGGLRTVVLDDVNGVLVDGHDPLAWADVLGALLADDGRRARLAAGARAASRRFGWDEAAAAMLDVYAQATKRRPAR</sequence>
<protein>
    <recommendedName>
        <fullName>D-inositol 3-phosphate glycosyltransferase</fullName>
        <ecNumber evidence="1">2.4.1.250</ecNumber>
    </recommendedName>
    <alternativeName>
        <fullName evidence="1">N-acetylglucosamine-inositol-phosphate N-acetylglucosaminyltransferase</fullName>
        <shortName evidence="1">GlcNAc-Ins-P N-acetylglucosaminyltransferase</shortName>
    </alternativeName>
</protein>
<accession>D1BZ82</accession>
<keyword id="KW-0328">Glycosyltransferase</keyword>
<keyword id="KW-0460">Magnesium</keyword>
<keyword id="KW-0479">Metal-binding</keyword>
<keyword id="KW-1185">Reference proteome</keyword>
<keyword id="KW-0808">Transferase</keyword>
<feature type="chain" id="PRO_0000400170" description="D-inositol 3-phosphate glycosyltransferase">
    <location>
        <begin position="1"/>
        <end position="417"/>
    </location>
</feature>
<feature type="binding site" evidence="1">
    <location>
        <position position="15"/>
    </location>
    <ligand>
        <name>1D-myo-inositol 3-phosphate</name>
        <dbReference type="ChEBI" id="CHEBI:58401"/>
    </ligand>
</feature>
<feature type="binding site" evidence="1">
    <location>
        <begin position="21"/>
        <end position="22"/>
    </location>
    <ligand>
        <name>UDP-N-acetyl-alpha-D-glucosamine</name>
        <dbReference type="ChEBI" id="CHEBI:57705"/>
    </ligand>
</feature>
<feature type="binding site" evidence="1">
    <location>
        <begin position="26"/>
        <end position="31"/>
    </location>
    <ligand>
        <name>1D-myo-inositol 3-phosphate</name>
        <dbReference type="ChEBI" id="CHEBI:58401"/>
    </ligand>
</feature>
<feature type="binding site" evidence="1">
    <location>
        <position position="29"/>
    </location>
    <ligand>
        <name>UDP-N-acetyl-alpha-D-glucosamine</name>
        <dbReference type="ChEBI" id="CHEBI:57705"/>
    </ligand>
</feature>
<feature type="binding site" evidence="1">
    <location>
        <position position="84"/>
    </location>
    <ligand>
        <name>1D-myo-inositol 3-phosphate</name>
        <dbReference type="ChEBI" id="CHEBI:58401"/>
    </ligand>
</feature>
<feature type="binding site" evidence="1">
    <location>
        <position position="117"/>
    </location>
    <ligand>
        <name>1D-myo-inositol 3-phosphate</name>
        <dbReference type="ChEBI" id="CHEBI:58401"/>
    </ligand>
</feature>
<feature type="binding site" evidence="1">
    <location>
        <position position="141"/>
    </location>
    <ligand>
        <name>1D-myo-inositol 3-phosphate</name>
        <dbReference type="ChEBI" id="CHEBI:58401"/>
    </ligand>
</feature>
<feature type="binding site" evidence="1">
    <location>
        <position position="161"/>
    </location>
    <ligand>
        <name>1D-myo-inositol 3-phosphate</name>
        <dbReference type="ChEBI" id="CHEBI:58401"/>
    </ligand>
</feature>
<feature type="binding site" evidence="1">
    <location>
        <position position="241"/>
    </location>
    <ligand>
        <name>UDP-N-acetyl-alpha-D-glucosamine</name>
        <dbReference type="ChEBI" id="CHEBI:57705"/>
    </ligand>
</feature>
<feature type="binding site" evidence="1">
    <location>
        <position position="246"/>
    </location>
    <ligand>
        <name>UDP-N-acetyl-alpha-D-glucosamine</name>
        <dbReference type="ChEBI" id="CHEBI:57705"/>
    </ligand>
</feature>
<feature type="binding site" evidence="1">
    <location>
        <position position="299"/>
    </location>
    <ligand>
        <name>UDP-N-acetyl-alpha-D-glucosamine</name>
        <dbReference type="ChEBI" id="CHEBI:57705"/>
    </ligand>
</feature>
<feature type="binding site" evidence="1">
    <location>
        <position position="308"/>
    </location>
    <ligand>
        <name>Mg(2+)</name>
        <dbReference type="ChEBI" id="CHEBI:18420"/>
    </ligand>
</feature>
<feature type="binding site" evidence="1">
    <location>
        <position position="309"/>
    </location>
    <ligand>
        <name>Mg(2+)</name>
        <dbReference type="ChEBI" id="CHEBI:18420"/>
    </ligand>
</feature>
<feature type="binding site" evidence="1">
    <location>
        <position position="311"/>
    </location>
    <ligand>
        <name>Mg(2+)</name>
        <dbReference type="ChEBI" id="CHEBI:18420"/>
    </ligand>
</feature>
<feature type="binding site" evidence="1">
    <location>
        <position position="321"/>
    </location>
    <ligand>
        <name>UDP-N-acetyl-alpha-D-glucosamine</name>
        <dbReference type="ChEBI" id="CHEBI:57705"/>
    </ligand>
</feature>
<feature type="binding site" evidence="1">
    <location>
        <position position="329"/>
    </location>
    <ligand>
        <name>UDP-N-acetyl-alpha-D-glucosamine</name>
        <dbReference type="ChEBI" id="CHEBI:57705"/>
    </ligand>
</feature>
<feature type="binding site" evidence="1">
    <location>
        <position position="335"/>
    </location>
    <ligand>
        <name>Mg(2+)</name>
        <dbReference type="ChEBI" id="CHEBI:18420"/>
    </ligand>
</feature>
<evidence type="ECO:0000255" key="1">
    <source>
        <dbReference type="HAMAP-Rule" id="MF_01695"/>
    </source>
</evidence>
<dbReference type="EC" id="2.4.1.250" evidence="1"/>
<dbReference type="EMBL" id="CP001821">
    <property type="protein sequence ID" value="ACZ31979.1"/>
    <property type="molecule type" value="Genomic_DNA"/>
</dbReference>
<dbReference type="RefSeq" id="WP_012879721.1">
    <property type="nucleotide sequence ID" value="NC_013530.1"/>
</dbReference>
<dbReference type="SMR" id="D1BZ82"/>
<dbReference type="STRING" id="446471.Xcel_2973"/>
<dbReference type="CAZy" id="GT4">
    <property type="family name" value="Glycosyltransferase Family 4"/>
</dbReference>
<dbReference type="KEGG" id="xce:Xcel_2973"/>
<dbReference type="eggNOG" id="COG0297">
    <property type="taxonomic scope" value="Bacteria"/>
</dbReference>
<dbReference type="HOGENOM" id="CLU_009583_2_3_11"/>
<dbReference type="OrthoDB" id="9810929at2"/>
<dbReference type="Proteomes" id="UP000002255">
    <property type="component" value="Chromosome"/>
</dbReference>
<dbReference type="GO" id="GO:0008375">
    <property type="term" value="F:acetylglucosaminyltransferase activity"/>
    <property type="evidence" value="ECO:0007669"/>
    <property type="project" value="UniProtKB-UniRule"/>
</dbReference>
<dbReference type="GO" id="GO:0102710">
    <property type="term" value="F:D-inositol-3-phosphate glycosyltransferase activity"/>
    <property type="evidence" value="ECO:0007669"/>
    <property type="project" value="UniProtKB-EC"/>
</dbReference>
<dbReference type="GO" id="GO:0000287">
    <property type="term" value="F:magnesium ion binding"/>
    <property type="evidence" value="ECO:0007669"/>
    <property type="project" value="UniProtKB-UniRule"/>
</dbReference>
<dbReference type="GO" id="GO:0010125">
    <property type="term" value="P:mycothiol biosynthetic process"/>
    <property type="evidence" value="ECO:0007669"/>
    <property type="project" value="UniProtKB-UniRule"/>
</dbReference>
<dbReference type="Gene3D" id="3.40.50.2000">
    <property type="entry name" value="Glycogen Phosphorylase B"/>
    <property type="match status" value="2"/>
</dbReference>
<dbReference type="HAMAP" id="MF_01695">
    <property type="entry name" value="MshA"/>
    <property type="match status" value="1"/>
</dbReference>
<dbReference type="InterPro" id="IPR001296">
    <property type="entry name" value="Glyco_trans_1"/>
</dbReference>
<dbReference type="InterPro" id="IPR028098">
    <property type="entry name" value="Glyco_trans_4-like_N"/>
</dbReference>
<dbReference type="InterPro" id="IPR050194">
    <property type="entry name" value="Glycosyltransferase_grp1"/>
</dbReference>
<dbReference type="InterPro" id="IPR017814">
    <property type="entry name" value="Mycothiol_biosynthesis_MshA"/>
</dbReference>
<dbReference type="NCBIfam" id="TIGR03449">
    <property type="entry name" value="mycothiol_MshA"/>
    <property type="match status" value="1"/>
</dbReference>
<dbReference type="PANTHER" id="PTHR45947">
    <property type="entry name" value="SULFOQUINOVOSYL TRANSFERASE SQD2"/>
    <property type="match status" value="1"/>
</dbReference>
<dbReference type="PANTHER" id="PTHR45947:SF3">
    <property type="entry name" value="SULFOQUINOVOSYL TRANSFERASE SQD2"/>
    <property type="match status" value="1"/>
</dbReference>
<dbReference type="Pfam" id="PF13579">
    <property type="entry name" value="Glyco_trans_4_4"/>
    <property type="match status" value="1"/>
</dbReference>
<dbReference type="Pfam" id="PF00534">
    <property type="entry name" value="Glycos_transf_1"/>
    <property type="match status" value="1"/>
</dbReference>
<dbReference type="SUPFAM" id="SSF53756">
    <property type="entry name" value="UDP-Glycosyltransferase/glycogen phosphorylase"/>
    <property type="match status" value="1"/>
</dbReference>